<evidence type="ECO:0000255" key="1"/>
<evidence type="ECO:0000305" key="2"/>
<evidence type="ECO:0007829" key="3">
    <source>
        <dbReference type="PDB" id="1CZ4"/>
    </source>
</evidence>
<evidence type="ECO:0007829" key="4">
    <source>
        <dbReference type="PDB" id="1CZ5"/>
    </source>
</evidence>
<evidence type="ECO:0007829" key="5">
    <source>
        <dbReference type="PDB" id="7DBO"/>
    </source>
</evidence>
<organism>
    <name type="scientific">Thermoplasma acidophilum (strain ATCC 25905 / DSM 1728 / JCM 9062 / NBRC 15155 / AMRC-C165)</name>
    <dbReference type="NCBI Taxonomy" id="273075"/>
    <lineage>
        <taxon>Archaea</taxon>
        <taxon>Methanobacteriati</taxon>
        <taxon>Thermoplasmatota</taxon>
        <taxon>Thermoplasmata</taxon>
        <taxon>Thermoplasmatales</taxon>
        <taxon>Thermoplasmataceae</taxon>
        <taxon>Thermoplasma</taxon>
    </lineage>
</organism>
<sequence>MESNNGIILRVAEANSTDPGMSRVRLDESSRRLLDAEIGDVVEIEKVRKTVGRVYRARPEDENKGIVRIDSVMRNNCGASIGDKVKVRKVRTEIAKKVTLAPIIRKDQRLKFGEGIEEYVQRALIRRPMLEQDNISVPGLTLAGQTGLLFKVVKTLPSKVPVEIGEETKIEIREEPASEVLEEVSRISYEDIGGLSEQLGKIREMIELPLKHPELFERLGITPPKGVILYGPPGTGKTLIARAVANESGANFLSINGPEIMSKYYGQSEQKLREIFSKAEETAPSIIFIDEIDSIAPKREEVQGEVERRVVAQLLTLMDGMKERGHVIVIGATNRIDAIDPALRRPGRFDREIEIGVPDRNGRKEILMIHTRNMPLGMSEEEKNKFLEEMADYTYGFVGADLAALVRESAMNALRRYLPEIDLDKPIPTEILEKMVVTEDDFKNALKSIEPSSLREVMVEVPNVHWDDIGGLEDVKREIKETVELPLLKPDVFKRLGIRPSKGFLLYGPPGVGKTLLAKAVATESNANFISIKGPEVLSKWVGESEKAIREIFKKAKQVAPAIVFLDEIDSIAPRRGTTSDSGVTERIVNQLLTSLDGIEVMNGVVVIGATNRPDIMDPALLRAGRFDKLIYIPPPDKEARLSILKVHTKNMPLAPDVDLNDIAQRTEGYVGADLENLCREAGMNAYRENPDATSVSQKNFLDALKTIRPSVDEEVIKFYRTLSETMSKSVSERRKQLQDQGLYL</sequence>
<gene>
    <name type="primary">vat</name>
    <name type="ordered locus">Ta0840</name>
</gene>
<feature type="chain" id="PRO_0000084624" description="VCP-like ATPase">
    <location>
        <begin position="1"/>
        <end position="745"/>
    </location>
</feature>
<feature type="binding site" evidence="1">
    <location>
        <begin position="231"/>
        <end position="238"/>
    </location>
    <ligand>
        <name>ATP</name>
        <dbReference type="ChEBI" id="CHEBI:30616"/>
    </ligand>
</feature>
<feature type="binding site" evidence="1">
    <location>
        <begin position="508"/>
        <end position="515"/>
    </location>
    <ligand>
        <name>ATP</name>
        <dbReference type="ChEBI" id="CHEBI:30616"/>
    </ligand>
</feature>
<feature type="strand" evidence="5">
    <location>
        <begin position="4"/>
        <end position="12"/>
    </location>
</feature>
<feature type="strand" evidence="5">
    <location>
        <begin position="23"/>
        <end position="26"/>
    </location>
</feature>
<feature type="helix" evidence="5">
    <location>
        <begin position="28"/>
        <end position="34"/>
    </location>
</feature>
<feature type="strand" evidence="5">
    <location>
        <begin position="41"/>
        <end position="56"/>
    </location>
</feature>
<feature type="helix" evidence="5">
    <location>
        <begin position="59"/>
        <end position="61"/>
    </location>
</feature>
<feature type="strand" evidence="5">
    <location>
        <begin position="66"/>
        <end position="68"/>
    </location>
</feature>
<feature type="helix" evidence="5">
    <location>
        <begin position="71"/>
        <end position="77"/>
    </location>
</feature>
<feature type="strand" evidence="5">
    <location>
        <begin position="84"/>
        <end position="89"/>
    </location>
</feature>
<feature type="strand" evidence="3">
    <location>
        <begin position="96"/>
        <end position="103"/>
    </location>
</feature>
<feature type="turn" evidence="4">
    <location>
        <begin position="106"/>
        <end position="109"/>
    </location>
</feature>
<feature type="helix" evidence="3">
    <location>
        <begin position="116"/>
        <end position="124"/>
    </location>
</feature>
<feature type="strand" evidence="3">
    <location>
        <begin position="149"/>
        <end position="160"/>
    </location>
</feature>
<feature type="strand" evidence="3">
    <location>
        <begin position="169"/>
        <end position="172"/>
    </location>
</feature>
<feature type="strand" evidence="4">
    <location>
        <begin position="177"/>
        <end position="179"/>
    </location>
</feature>
<protein>
    <recommendedName>
        <fullName>VCP-like ATPase</fullName>
    </recommendedName>
</protein>
<name>VAT_THEAC</name>
<proteinExistence type="evidence at protein level"/>
<keyword id="KW-0002">3D-structure</keyword>
<keyword id="KW-0067">ATP-binding</keyword>
<keyword id="KW-0547">Nucleotide-binding</keyword>
<keyword id="KW-1185">Reference proteome</keyword>
<keyword id="KW-0677">Repeat</keyword>
<reference key="1">
    <citation type="journal article" date="1997" name="FEBS Lett.">
        <title>Cloning, sequencing and expression of VAT, a CDC48/p97 ATPase homologue from the archaeon Thermoplasma acidophilum.</title>
        <authorList>
            <person name="Pamnani V."/>
            <person name="Tamura T."/>
            <person name="Lupas A.N."/>
            <person name="Peters J."/>
            <person name="Cejka Z."/>
            <person name="Ashraf W."/>
            <person name="Baumeister W."/>
        </authorList>
    </citation>
    <scope>NUCLEOTIDE SEQUENCE [GENOMIC DNA]</scope>
    <source>
        <strain>ATCC 25905 / DSM 1728 / JCM 9062 / NBRC 15155 / AMRC-C165</strain>
    </source>
</reference>
<reference key="2">
    <citation type="journal article" date="2000" name="Nature">
        <title>The genome sequence of the thermoacidophilic scavenger Thermoplasma acidophilum.</title>
        <authorList>
            <person name="Ruepp A."/>
            <person name="Graml W."/>
            <person name="Santos-Martinez M.-L."/>
            <person name="Koretke K.K."/>
            <person name="Volker C."/>
            <person name="Mewes H.-W."/>
            <person name="Frishman D."/>
            <person name="Stocker S."/>
            <person name="Lupas A.N."/>
            <person name="Baumeister W."/>
        </authorList>
    </citation>
    <scope>NUCLEOTIDE SEQUENCE [LARGE SCALE GENOMIC DNA]</scope>
    <source>
        <strain>ATCC 25905 / DSM 1728 / JCM 9062 / NBRC 15155 / AMRC-C165</strain>
    </source>
</reference>
<reference key="3">
    <citation type="journal article" date="1999" name="FEBS Lett.">
        <title>Structure of VAT, a CDC48/p97 ATPase homologue from the archaeon Thermoplasma acidophilum as studied by electron tomography.</title>
        <authorList>
            <person name="Rockel B."/>
            <person name="Walz J."/>
            <person name="Hegerl R."/>
            <person name="Peters J."/>
            <person name="Typke D."/>
            <person name="Baumeister W."/>
        </authorList>
    </citation>
    <scope>3D-STRUCTURE BY ELECTRON TOMOGRAPHY</scope>
    <source>
        <strain>ATCC 25905 / DSM 1728 / JCM 9062 / NBRC 15155 / AMRC-C165</strain>
    </source>
</reference>
<comment type="biophysicochemical properties">
    <temperatureDependence>
        <text>Optimum temperature is 70 degrees Celsius.</text>
    </temperatureDependence>
</comment>
<comment type="subunit">
    <text>Homohexamer. Forms a ring-shaped particle.</text>
</comment>
<comment type="similarity">
    <text evidence="2">Belongs to the AAA ATPase family. CDC48 subfamily.</text>
</comment>
<accession>O05209</accession>
<dbReference type="EMBL" id="U78072">
    <property type="protein sequence ID" value="AAC45089.1"/>
    <property type="molecule type" value="Genomic_DNA"/>
</dbReference>
<dbReference type="EMBL" id="AL445065">
    <property type="protein sequence ID" value="CAC11969.1"/>
    <property type="molecule type" value="Genomic_DNA"/>
</dbReference>
<dbReference type="PIR" id="T37458">
    <property type="entry name" value="T37458"/>
</dbReference>
<dbReference type="RefSeq" id="WP_010901251.1">
    <property type="nucleotide sequence ID" value="NC_002578.1"/>
</dbReference>
<dbReference type="PDB" id="1CZ4">
    <property type="method" value="NMR"/>
    <property type="chains" value="A=1-183"/>
</dbReference>
<dbReference type="PDB" id="1CZ5">
    <property type="method" value="NMR"/>
    <property type="chains" value="A=1-183"/>
</dbReference>
<dbReference type="PDB" id="5G4F">
    <property type="method" value="EM"/>
    <property type="resolution" value="7.00 A"/>
    <property type="chains" value="A/B/C/D/E/P=1-726"/>
</dbReference>
<dbReference type="PDB" id="5G4G">
    <property type="method" value="EM"/>
    <property type="resolution" value="7.80 A"/>
    <property type="chains" value="A/B/C/D/E/F=6-726"/>
</dbReference>
<dbReference type="PDB" id="5VC7">
    <property type="method" value="EM"/>
    <property type="resolution" value="3.90 A"/>
    <property type="chains" value="A/C/D/E/F/G=183-745"/>
</dbReference>
<dbReference type="PDB" id="5VCA">
    <property type="method" value="EM"/>
    <property type="resolution" value="3.90 A"/>
    <property type="chains" value="M/N/O/P/Q/R=183-745"/>
</dbReference>
<dbReference type="PDB" id="7DBO">
    <property type="method" value="X-ray"/>
    <property type="resolution" value="1.90 A"/>
    <property type="chains" value="A/B=1-91"/>
</dbReference>
<dbReference type="PDBsum" id="1CZ4"/>
<dbReference type="PDBsum" id="1CZ5"/>
<dbReference type="PDBsum" id="5G4F"/>
<dbReference type="PDBsum" id="5G4G"/>
<dbReference type="PDBsum" id="5VC7"/>
<dbReference type="PDBsum" id="5VCA"/>
<dbReference type="PDBsum" id="7DBO"/>
<dbReference type="BMRB" id="O05209"/>
<dbReference type="EMDB" id="EMD-3435"/>
<dbReference type="EMDB" id="EMD-3436"/>
<dbReference type="EMDB" id="EMD-5923"/>
<dbReference type="EMDB" id="EMD-5924"/>
<dbReference type="EMDB" id="EMD-8658"/>
<dbReference type="EMDB" id="EMD-8659"/>
<dbReference type="SMR" id="O05209"/>
<dbReference type="FunCoup" id="O05209">
    <property type="interactions" value="119"/>
</dbReference>
<dbReference type="STRING" id="273075.gene:9572054"/>
<dbReference type="PaxDb" id="273075-Ta0840"/>
<dbReference type="EnsemblBacteria" id="CAC11969">
    <property type="protein sequence ID" value="CAC11969"/>
    <property type="gene ID" value="CAC11969"/>
</dbReference>
<dbReference type="KEGG" id="tac:Ta0840"/>
<dbReference type="eggNOG" id="arCOG01308">
    <property type="taxonomic scope" value="Archaea"/>
</dbReference>
<dbReference type="HOGENOM" id="CLU_000688_12_2_2"/>
<dbReference type="InParanoid" id="O05209"/>
<dbReference type="OrthoDB" id="77269at2157"/>
<dbReference type="EvolutionaryTrace" id="O05209"/>
<dbReference type="Proteomes" id="UP000001024">
    <property type="component" value="Chromosome"/>
</dbReference>
<dbReference type="GO" id="GO:0005737">
    <property type="term" value="C:cytoplasm"/>
    <property type="evidence" value="ECO:0007669"/>
    <property type="project" value="UniProtKB-ARBA"/>
</dbReference>
<dbReference type="GO" id="GO:0043231">
    <property type="term" value="C:intracellular membrane-bounded organelle"/>
    <property type="evidence" value="ECO:0007669"/>
    <property type="project" value="UniProtKB-ARBA"/>
</dbReference>
<dbReference type="GO" id="GO:0005524">
    <property type="term" value="F:ATP binding"/>
    <property type="evidence" value="ECO:0007669"/>
    <property type="project" value="UniProtKB-KW"/>
</dbReference>
<dbReference type="GO" id="GO:0016887">
    <property type="term" value="F:ATP hydrolysis activity"/>
    <property type="evidence" value="ECO:0007669"/>
    <property type="project" value="InterPro"/>
</dbReference>
<dbReference type="CDD" id="cd19519">
    <property type="entry name" value="RecA-like_CDC48_r1-like"/>
    <property type="match status" value="1"/>
</dbReference>
<dbReference type="CDD" id="cd19529">
    <property type="entry name" value="RecA-like_VCP_r2"/>
    <property type="match status" value="1"/>
</dbReference>
<dbReference type="FunFam" id="2.40.40.20:FF:000007">
    <property type="entry name" value="AAA family ATPase"/>
    <property type="match status" value="1"/>
</dbReference>
<dbReference type="FunFam" id="1.10.8.60:FF:000057">
    <property type="entry name" value="AAA family ATPase, CDC48 subfamily"/>
    <property type="match status" value="1"/>
</dbReference>
<dbReference type="FunFam" id="3.40.50.300:FF:000018">
    <property type="entry name" value="Cell division control 48"/>
    <property type="match status" value="1"/>
</dbReference>
<dbReference type="FunFam" id="1.10.8.60:FF:000038">
    <property type="entry name" value="spermatogenesis-associated protein 5-like protein 1"/>
    <property type="match status" value="1"/>
</dbReference>
<dbReference type="FunFam" id="3.40.50.300:FF:000012">
    <property type="entry name" value="Transitional endoplasmic reticulum ATPase"/>
    <property type="match status" value="1"/>
</dbReference>
<dbReference type="Gene3D" id="1.10.8.60">
    <property type="match status" value="2"/>
</dbReference>
<dbReference type="Gene3D" id="2.40.40.20">
    <property type="match status" value="1"/>
</dbReference>
<dbReference type="Gene3D" id="3.10.330.10">
    <property type="match status" value="1"/>
</dbReference>
<dbReference type="Gene3D" id="3.40.50.300">
    <property type="entry name" value="P-loop containing nucleotide triphosphate hydrolases"/>
    <property type="match status" value="2"/>
</dbReference>
<dbReference type="InterPro" id="IPR003593">
    <property type="entry name" value="AAA+_ATPase"/>
</dbReference>
<dbReference type="InterPro" id="IPR005938">
    <property type="entry name" value="AAA_ATPase_CDC48"/>
</dbReference>
<dbReference type="InterPro" id="IPR050168">
    <property type="entry name" value="AAA_ATPase_domain"/>
</dbReference>
<dbReference type="InterPro" id="IPR041569">
    <property type="entry name" value="AAA_lid_3"/>
</dbReference>
<dbReference type="InterPro" id="IPR009010">
    <property type="entry name" value="Asp_de-COase-like_dom_sf"/>
</dbReference>
<dbReference type="InterPro" id="IPR003959">
    <property type="entry name" value="ATPase_AAA_core"/>
</dbReference>
<dbReference type="InterPro" id="IPR003960">
    <property type="entry name" value="ATPase_AAA_CS"/>
</dbReference>
<dbReference type="InterPro" id="IPR004201">
    <property type="entry name" value="Cdc48_dom2"/>
</dbReference>
<dbReference type="InterPro" id="IPR029067">
    <property type="entry name" value="CDC48_domain_2-like_sf"/>
</dbReference>
<dbReference type="InterPro" id="IPR003338">
    <property type="entry name" value="CDC4_N-term_subdom"/>
</dbReference>
<dbReference type="InterPro" id="IPR027417">
    <property type="entry name" value="P-loop_NTPase"/>
</dbReference>
<dbReference type="NCBIfam" id="TIGR01243">
    <property type="entry name" value="CDC48"/>
    <property type="match status" value="1"/>
</dbReference>
<dbReference type="PANTHER" id="PTHR23077">
    <property type="entry name" value="AAA-FAMILY ATPASE"/>
    <property type="match status" value="1"/>
</dbReference>
<dbReference type="PANTHER" id="PTHR23077:SF171">
    <property type="entry name" value="NUCLEAR VALOSIN-CONTAINING PROTEIN-LIKE"/>
    <property type="match status" value="1"/>
</dbReference>
<dbReference type="Pfam" id="PF00004">
    <property type="entry name" value="AAA"/>
    <property type="match status" value="2"/>
</dbReference>
<dbReference type="Pfam" id="PF17862">
    <property type="entry name" value="AAA_lid_3"/>
    <property type="match status" value="2"/>
</dbReference>
<dbReference type="Pfam" id="PF02933">
    <property type="entry name" value="CDC48_2"/>
    <property type="match status" value="1"/>
</dbReference>
<dbReference type="Pfam" id="PF02359">
    <property type="entry name" value="CDC48_N"/>
    <property type="match status" value="1"/>
</dbReference>
<dbReference type="SMART" id="SM00382">
    <property type="entry name" value="AAA"/>
    <property type="match status" value="2"/>
</dbReference>
<dbReference type="SMART" id="SM01072">
    <property type="entry name" value="CDC48_2"/>
    <property type="match status" value="1"/>
</dbReference>
<dbReference type="SMART" id="SM01073">
    <property type="entry name" value="CDC48_N"/>
    <property type="match status" value="1"/>
</dbReference>
<dbReference type="SUPFAM" id="SSF50692">
    <property type="entry name" value="ADC-like"/>
    <property type="match status" value="1"/>
</dbReference>
<dbReference type="SUPFAM" id="SSF54585">
    <property type="entry name" value="Cdc48 domain 2-like"/>
    <property type="match status" value="1"/>
</dbReference>
<dbReference type="SUPFAM" id="SSF52540">
    <property type="entry name" value="P-loop containing nucleoside triphosphate hydrolases"/>
    <property type="match status" value="2"/>
</dbReference>
<dbReference type="PROSITE" id="PS00674">
    <property type="entry name" value="AAA"/>
    <property type="match status" value="2"/>
</dbReference>